<comment type="function">
    <text evidence="1">Probably mediates the hydrolysis of some nucleoside diphosphate derivatives.</text>
</comment>
<comment type="cofactor">
    <cofactor evidence="1">
        <name>Mn(2+)</name>
        <dbReference type="ChEBI" id="CHEBI:29035"/>
    </cofactor>
    <cofactor evidence="1">
        <name>Mg(2+)</name>
        <dbReference type="ChEBI" id="CHEBI:18420"/>
    </cofactor>
</comment>
<comment type="similarity">
    <text evidence="1">Belongs to the Nudix hydrolase family. PCD1 subfamily.</text>
</comment>
<name>NUDL_ECO8A</name>
<feature type="chain" id="PRO_1000147815" description="Uncharacterized Nudix hydrolase NudL">
    <location>
        <begin position="1"/>
        <end position="192"/>
    </location>
</feature>
<feature type="domain" description="Nudix hydrolase" evidence="1">
    <location>
        <begin position="29"/>
        <end position="160"/>
    </location>
</feature>
<feature type="short sequence motif" description="Nudix box">
    <location>
        <begin position="67"/>
        <end position="89"/>
    </location>
</feature>
<feature type="binding site" evidence="1">
    <location>
        <position position="83"/>
    </location>
    <ligand>
        <name>Mg(2+)</name>
        <dbReference type="ChEBI" id="CHEBI:18420"/>
    </ligand>
</feature>
<feature type="binding site" evidence="1">
    <location>
        <position position="87"/>
    </location>
    <ligand>
        <name>Mg(2+)</name>
        <dbReference type="ChEBI" id="CHEBI:18420"/>
    </ligand>
</feature>
<reference key="1">
    <citation type="journal article" date="2009" name="PLoS Genet.">
        <title>Organised genome dynamics in the Escherichia coli species results in highly diverse adaptive paths.</title>
        <authorList>
            <person name="Touchon M."/>
            <person name="Hoede C."/>
            <person name="Tenaillon O."/>
            <person name="Barbe V."/>
            <person name="Baeriswyl S."/>
            <person name="Bidet P."/>
            <person name="Bingen E."/>
            <person name="Bonacorsi S."/>
            <person name="Bouchier C."/>
            <person name="Bouvet O."/>
            <person name="Calteau A."/>
            <person name="Chiapello H."/>
            <person name="Clermont O."/>
            <person name="Cruveiller S."/>
            <person name="Danchin A."/>
            <person name="Diard M."/>
            <person name="Dossat C."/>
            <person name="Karoui M.E."/>
            <person name="Frapy E."/>
            <person name="Garry L."/>
            <person name="Ghigo J.M."/>
            <person name="Gilles A.M."/>
            <person name="Johnson J."/>
            <person name="Le Bouguenec C."/>
            <person name="Lescat M."/>
            <person name="Mangenot S."/>
            <person name="Martinez-Jehanne V."/>
            <person name="Matic I."/>
            <person name="Nassif X."/>
            <person name="Oztas S."/>
            <person name="Petit M.A."/>
            <person name="Pichon C."/>
            <person name="Rouy Z."/>
            <person name="Ruf C.S."/>
            <person name="Schneider D."/>
            <person name="Tourret J."/>
            <person name="Vacherie B."/>
            <person name="Vallenet D."/>
            <person name="Medigue C."/>
            <person name="Rocha E.P.C."/>
            <person name="Denamur E."/>
        </authorList>
    </citation>
    <scope>NUCLEOTIDE SEQUENCE [LARGE SCALE GENOMIC DNA]</scope>
    <source>
        <strain>IAI1</strain>
    </source>
</reference>
<proteinExistence type="inferred from homology"/>
<accession>B7M287</accession>
<organism>
    <name type="scientific">Escherichia coli O8 (strain IAI1)</name>
    <dbReference type="NCBI Taxonomy" id="585034"/>
    <lineage>
        <taxon>Bacteria</taxon>
        <taxon>Pseudomonadati</taxon>
        <taxon>Pseudomonadota</taxon>
        <taxon>Gammaproteobacteria</taxon>
        <taxon>Enterobacterales</taxon>
        <taxon>Enterobacteriaceae</taxon>
        <taxon>Escherichia</taxon>
    </lineage>
</organism>
<protein>
    <recommendedName>
        <fullName evidence="1">Uncharacterized Nudix hydrolase NudL</fullName>
        <ecNumber evidence="1">3.6.1.-</ecNumber>
    </recommendedName>
</protein>
<dbReference type="EC" id="3.6.1.-" evidence="1"/>
<dbReference type="EMBL" id="CU928160">
    <property type="protein sequence ID" value="CAQ98736.1"/>
    <property type="molecule type" value="Genomic_DNA"/>
</dbReference>
<dbReference type="RefSeq" id="WP_000456725.1">
    <property type="nucleotide sequence ID" value="NC_011741.1"/>
</dbReference>
<dbReference type="SMR" id="B7M287"/>
<dbReference type="KEGG" id="ecr:ECIAI1_1882"/>
<dbReference type="HOGENOM" id="CLU_040940_5_2_6"/>
<dbReference type="GO" id="GO:0010945">
    <property type="term" value="F:coenzyme A diphosphatase activity"/>
    <property type="evidence" value="ECO:0007669"/>
    <property type="project" value="InterPro"/>
</dbReference>
<dbReference type="GO" id="GO:0000287">
    <property type="term" value="F:magnesium ion binding"/>
    <property type="evidence" value="ECO:0007669"/>
    <property type="project" value="UniProtKB-UniRule"/>
</dbReference>
<dbReference type="GO" id="GO:0030145">
    <property type="term" value="F:manganese ion binding"/>
    <property type="evidence" value="ECO:0007669"/>
    <property type="project" value="UniProtKB-UniRule"/>
</dbReference>
<dbReference type="GO" id="GO:0009132">
    <property type="term" value="P:nucleoside diphosphate metabolic process"/>
    <property type="evidence" value="ECO:0007669"/>
    <property type="project" value="InterPro"/>
</dbReference>
<dbReference type="CDD" id="cd03426">
    <property type="entry name" value="NUDIX_CoAse_Nudt7"/>
    <property type="match status" value="1"/>
</dbReference>
<dbReference type="FunFam" id="3.90.79.10:FF:000013">
    <property type="entry name" value="Uncharacterized Nudix hydrolase NudL"/>
    <property type="match status" value="1"/>
</dbReference>
<dbReference type="Gene3D" id="3.90.79.10">
    <property type="entry name" value="Nucleoside Triphosphate Pyrophosphohydrolase"/>
    <property type="match status" value="1"/>
</dbReference>
<dbReference type="HAMAP" id="MF_01592">
    <property type="entry name" value="Nudix_NudL"/>
    <property type="match status" value="1"/>
</dbReference>
<dbReference type="InterPro" id="IPR045121">
    <property type="entry name" value="CoAse"/>
</dbReference>
<dbReference type="InterPro" id="IPR015797">
    <property type="entry name" value="NUDIX_hydrolase-like_dom_sf"/>
</dbReference>
<dbReference type="InterPro" id="IPR000086">
    <property type="entry name" value="NUDIX_hydrolase_dom"/>
</dbReference>
<dbReference type="InterPro" id="IPR000059">
    <property type="entry name" value="NUDIX_hydrolase_NudL_CS"/>
</dbReference>
<dbReference type="InterPro" id="IPR023735">
    <property type="entry name" value="Nudix_NudL"/>
</dbReference>
<dbReference type="NCBIfam" id="NF007980">
    <property type="entry name" value="PRK10707.1"/>
    <property type="match status" value="1"/>
</dbReference>
<dbReference type="PANTHER" id="PTHR12992:SF11">
    <property type="entry name" value="MITOCHONDRIAL COENZYME A DIPHOSPHATASE NUDT8"/>
    <property type="match status" value="1"/>
</dbReference>
<dbReference type="PANTHER" id="PTHR12992">
    <property type="entry name" value="NUDIX HYDROLASE"/>
    <property type="match status" value="1"/>
</dbReference>
<dbReference type="Pfam" id="PF00293">
    <property type="entry name" value="NUDIX"/>
    <property type="match status" value="1"/>
</dbReference>
<dbReference type="SUPFAM" id="SSF55811">
    <property type="entry name" value="Nudix"/>
    <property type="match status" value="1"/>
</dbReference>
<dbReference type="PROSITE" id="PS51462">
    <property type="entry name" value="NUDIX"/>
    <property type="match status" value="1"/>
</dbReference>
<dbReference type="PROSITE" id="PS01293">
    <property type="entry name" value="NUDIX_COA"/>
    <property type="match status" value="1"/>
</dbReference>
<gene>
    <name evidence="1" type="primary">nudL</name>
    <name type="ordered locus">ECIAI1_1882</name>
</gene>
<keyword id="KW-0378">Hydrolase</keyword>
<keyword id="KW-0460">Magnesium</keyword>
<keyword id="KW-0464">Manganese</keyword>
<keyword id="KW-0479">Metal-binding</keyword>
<evidence type="ECO:0000255" key="1">
    <source>
        <dbReference type="HAMAP-Rule" id="MF_01592"/>
    </source>
</evidence>
<sequence>MEYRSLTLDDFLSRFQLLRPQINRETLNHRQAAVLIPIVRRPQPGLLLTQRSIHLRKHAGQVAFPGGAVDDTDASVIAAALREAEEEVAIPPSAVEVIGVLPPVDSVTGYQVTPVVGIIPPDLPYRASEDEVSAVFEMPLAQALHLGRYHPLDIYRRGDSHRVWLSWYEQYFVWGMTAGIIRELALQIGVKP</sequence>